<protein>
    <recommendedName>
        <fullName>Probable oligo-1,6-glucosidase 3</fullName>
        <ecNumber>3.2.1.10</ecNumber>
    </recommendedName>
    <alternativeName>
        <fullName>Oligosaccharide alpha-1,6-glucosidase 3</fullName>
    </alternativeName>
    <alternativeName>
        <fullName>Sucrase-isomaltase 3</fullName>
        <shortName>Isomaltase 3</shortName>
    </alternativeName>
</protein>
<proteinExistence type="inferred from homology"/>
<gene>
    <name type="primary">yugT</name>
    <name type="ordered locus">BSU31290</name>
</gene>
<name>O16G3_BACSU</name>
<organism>
    <name type="scientific">Bacillus subtilis (strain 168)</name>
    <dbReference type="NCBI Taxonomy" id="224308"/>
    <lineage>
        <taxon>Bacteria</taxon>
        <taxon>Bacillati</taxon>
        <taxon>Bacillota</taxon>
        <taxon>Bacilli</taxon>
        <taxon>Bacillales</taxon>
        <taxon>Bacillaceae</taxon>
        <taxon>Bacillus</taxon>
    </lineage>
</organism>
<feature type="chain" id="PRO_0000361649" description="Probable oligo-1,6-glucosidase 3">
    <location>
        <begin position="1"/>
        <end position="554"/>
    </location>
</feature>
<feature type="active site" description="Nucleophile" evidence="1">
    <location>
        <position position="199"/>
    </location>
</feature>
<feature type="active site" description="Proton donor" evidence="1">
    <location>
        <position position="256"/>
    </location>
</feature>
<feature type="site" description="Transition state stabilizer" evidence="1">
    <location>
        <position position="326"/>
    </location>
</feature>
<feature type="sequence conflict" description="In Ref. 1; CAB07926." evidence="2" ref="1">
    <original>A</original>
    <variation>P</variation>
    <location>
        <position position="262"/>
    </location>
</feature>
<sequence length="554" mass="63969">MKKAWWKEAVVYQIYPRSFKDSNGDGIGDIQGIRTKLSYIKELGADVIWICPLYDSPNADNGYDIRDYQNILSEFGTMEDFDELLGDIHDLDMKLIMDLVVNHTSDEHPWFIESRSSIHSEKRDWYIWKDGKNGKTPNNWESIFGGPAWEYDQKTSQYYLHLFDKKQPDLNWENEKVRNAVYDMINWWLDKGIDGFRVDAITHIKKKEGFPDMPNPKGLDYVPSFPYHMNADGIMDLLTELKENTFSRYPIMTVGEANGVAAKEAADWAGEKNGIFSMIFQFEHLGLWDVEINESIDIVAFKRILTDWQDSLEGIGWNALFMENHDQPRSVSVWGDDGVYLKESAKALSAVYFLMKGTPFIYQGQELGMTNVAFPSIEDYDDVALKRLYETKTAKGTSHEDVMKIVWKKGRDNSRTPMQWNAGPYAGFSEAKPWIGINENYKWLNAEAQKNDKTSVYHFYKSLIKLRQTYDVFINGTYELILPEDQQIFAYLRKNESHTALIAANLTGTPALFRHSGLPLSSDALVLSNIETEPHKHMTSVLLKPYEARIYLWC</sequence>
<dbReference type="EC" id="3.2.1.10"/>
<dbReference type="EMBL" id="Z93935">
    <property type="protein sequence ID" value="CAB07926.1"/>
    <property type="molecule type" value="Genomic_DNA"/>
</dbReference>
<dbReference type="EMBL" id="AL009126">
    <property type="protein sequence ID" value="CAB15118.2"/>
    <property type="molecule type" value="Genomic_DNA"/>
</dbReference>
<dbReference type="PIR" id="H70011">
    <property type="entry name" value="H70011"/>
</dbReference>
<dbReference type="RefSeq" id="NP_391007.2">
    <property type="nucleotide sequence ID" value="NC_000964.3"/>
</dbReference>
<dbReference type="RefSeq" id="WP_003243842.1">
    <property type="nucleotide sequence ID" value="NZ_OZ025638.1"/>
</dbReference>
<dbReference type="SMR" id="O05242"/>
<dbReference type="FunCoup" id="O05242">
    <property type="interactions" value="113"/>
</dbReference>
<dbReference type="STRING" id="224308.BSU31290"/>
<dbReference type="CAZy" id="GH13">
    <property type="family name" value="Glycoside Hydrolase Family 13"/>
</dbReference>
<dbReference type="PaxDb" id="224308-BSU31290"/>
<dbReference type="EnsemblBacteria" id="CAB15118">
    <property type="protein sequence ID" value="CAB15118"/>
    <property type="gene ID" value="BSU_31290"/>
</dbReference>
<dbReference type="GeneID" id="938857"/>
<dbReference type="KEGG" id="bsu:BSU31290"/>
<dbReference type="PATRIC" id="fig|224308.179.peg.3391"/>
<dbReference type="eggNOG" id="COG0366">
    <property type="taxonomic scope" value="Bacteria"/>
</dbReference>
<dbReference type="InParanoid" id="O05242"/>
<dbReference type="OrthoDB" id="9805159at2"/>
<dbReference type="PhylomeDB" id="O05242"/>
<dbReference type="BioCyc" id="BSUB:BSU31290-MONOMER"/>
<dbReference type="Proteomes" id="UP000001570">
    <property type="component" value="Chromosome"/>
</dbReference>
<dbReference type="GO" id="GO:0005737">
    <property type="term" value="C:cytoplasm"/>
    <property type="evidence" value="ECO:0007669"/>
    <property type="project" value="UniProtKB-SubCell"/>
</dbReference>
<dbReference type="GO" id="GO:0004556">
    <property type="term" value="F:alpha-amylase activity"/>
    <property type="evidence" value="ECO:0000318"/>
    <property type="project" value="GO_Central"/>
</dbReference>
<dbReference type="GO" id="GO:0004574">
    <property type="term" value="F:oligo-1,6-glucosidase activity"/>
    <property type="evidence" value="ECO:0007669"/>
    <property type="project" value="UniProtKB-EC"/>
</dbReference>
<dbReference type="GO" id="GO:0009313">
    <property type="term" value="P:oligosaccharide catabolic process"/>
    <property type="evidence" value="ECO:0000318"/>
    <property type="project" value="GO_Central"/>
</dbReference>
<dbReference type="CDD" id="cd11333">
    <property type="entry name" value="AmyAc_SI_OligoGlu_DGase"/>
    <property type="match status" value="1"/>
</dbReference>
<dbReference type="FunFam" id="3.20.20.80:FF:000064">
    <property type="entry name" value="Oligo-1,6-glucosidase"/>
    <property type="match status" value="2"/>
</dbReference>
<dbReference type="FunFam" id="2.60.40.1180:FF:000007">
    <property type="entry name" value="Sucrose isomerase"/>
    <property type="match status" value="1"/>
</dbReference>
<dbReference type="FunFam" id="3.90.400.10:FF:000002">
    <property type="entry name" value="Sucrose isomerase"/>
    <property type="match status" value="1"/>
</dbReference>
<dbReference type="Gene3D" id="3.20.20.80">
    <property type="entry name" value="Glycosidases"/>
    <property type="match status" value="1"/>
</dbReference>
<dbReference type="Gene3D" id="2.60.40.1180">
    <property type="entry name" value="Golgi alpha-mannosidase II"/>
    <property type="match status" value="1"/>
</dbReference>
<dbReference type="Gene3D" id="3.90.400.10">
    <property type="entry name" value="Oligo-1,6-glucosidase, Domain 2"/>
    <property type="match status" value="1"/>
</dbReference>
<dbReference type="InterPro" id="IPR006047">
    <property type="entry name" value="Glyco_hydro_13_cat_dom"/>
</dbReference>
<dbReference type="InterPro" id="IPR013780">
    <property type="entry name" value="Glyco_hydro_b"/>
</dbReference>
<dbReference type="InterPro" id="IPR017853">
    <property type="entry name" value="Glycoside_hydrolase_SF"/>
</dbReference>
<dbReference type="InterPro" id="IPR032091">
    <property type="entry name" value="Malt_amylase-like_C"/>
</dbReference>
<dbReference type="InterPro" id="IPR045857">
    <property type="entry name" value="O16G_dom_2"/>
</dbReference>
<dbReference type="NCBIfam" id="NF008183">
    <property type="entry name" value="PRK10933.1"/>
    <property type="match status" value="1"/>
</dbReference>
<dbReference type="PANTHER" id="PTHR10357">
    <property type="entry name" value="ALPHA-AMYLASE FAMILY MEMBER"/>
    <property type="match status" value="1"/>
</dbReference>
<dbReference type="PANTHER" id="PTHR10357:SF178">
    <property type="entry name" value="OLIGO-1,6-GLUCOSIDASE 3-RELATED"/>
    <property type="match status" value="1"/>
</dbReference>
<dbReference type="Pfam" id="PF00128">
    <property type="entry name" value="Alpha-amylase"/>
    <property type="match status" value="1"/>
</dbReference>
<dbReference type="Pfam" id="PF16657">
    <property type="entry name" value="Malt_amylase_C"/>
    <property type="match status" value="1"/>
</dbReference>
<dbReference type="SMART" id="SM00642">
    <property type="entry name" value="Aamy"/>
    <property type="match status" value="1"/>
</dbReference>
<dbReference type="SUPFAM" id="SSF51445">
    <property type="entry name" value="(Trans)glycosidases"/>
    <property type="match status" value="1"/>
</dbReference>
<dbReference type="SUPFAM" id="SSF51011">
    <property type="entry name" value="Glycosyl hydrolase domain"/>
    <property type="match status" value="1"/>
</dbReference>
<reference key="1">
    <citation type="journal article" date="1997" name="Microbiology">
        <title>Analysis of the Bacillus subtilis genome: cloning and nucleotide sequence of a 62 kb region between 275 degrees (rrnB) and 284 degrees (pai).</title>
        <authorList>
            <person name="Oudega B."/>
            <person name="Koningstein G."/>
            <person name="Rodrigues L."/>
            <person name="de Sales Ramon M."/>
            <person name="Hilbert H."/>
            <person name="Duesterhoeft A."/>
            <person name="Pohl T.M."/>
            <person name="Weitzenegger T."/>
        </authorList>
    </citation>
    <scope>NUCLEOTIDE SEQUENCE [GENOMIC DNA]</scope>
    <source>
        <strain>168</strain>
    </source>
</reference>
<reference key="2">
    <citation type="journal article" date="1997" name="Nature">
        <title>The complete genome sequence of the Gram-positive bacterium Bacillus subtilis.</title>
        <authorList>
            <person name="Kunst F."/>
            <person name="Ogasawara N."/>
            <person name="Moszer I."/>
            <person name="Albertini A.M."/>
            <person name="Alloni G."/>
            <person name="Azevedo V."/>
            <person name="Bertero M.G."/>
            <person name="Bessieres P."/>
            <person name="Bolotin A."/>
            <person name="Borchert S."/>
            <person name="Borriss R."/>
            <person name="Boursier L."/>
            <person name="Brans A."/>
            <person name="Braun M."/>
            <person name="Brignell S.C."/>
            <person name="Bron S."/>
            <person name="Brouillet S."/>
            <person name="Bruschi C.V."/>
            <person name="Caldwell B."/>
            <person name="Capuano V."/>
            <person name="Carter N.M."/>
            <person name="Choi S.-K."/>
            <person name="Codani J.-J."/>
            <person name="Connerton I.F."/>
            <person name="Cummings N.J."/>
            <person name="Daniel R.A."/>
            <person name="Denizot F."/>
            <person name="Devine K.M."/>
            <person name="Duesterhoeft A."/>
            <person name="Ehrlich S.D."/>
            <person name="Emmerson P.T."/>
            <person name="Entian K.-D."/>
            <person name="Errington J."/>
            <person name="Fabret C."/>
            <person name="Ferrari E."/>
            <person name="Foulger D."/>
            <person name="Fritz C."/>
            <person name="Fujita M."/>
            <person name="Fujita Y."/>
            <person name="Fuma S."/>
            <person name="Galizzi A."/>
            <person name="Galleron N."/>
            <person name="Ghim S.-Y."/>
            <person name="Glaser P."/>
            <person name="Goffeau A."/>
            <person name="Golightly E.J."/>
            <person name="Grandi G."/>
            <person name="Guiseppi G."/>
            <person name="Guy B.J."/>
            <person name="Haga K."/>
            <person name="Haiech J."/>
            <person name="Harwood C.R."/>
            <person name="Henaut A."/>
            <person name="Hilbert H."/>
            <person name="Holsappel S."/>
            <person name="Hosono S."/>
            <person name="Hullo M.-F."/>
            <person name="Itaya M."/>
            <person name="Jones L.-M."/>
            <person name="Joris B."/>
            <person name="Karamata D."/>
            <person name="Kasahara Y."/>
            <person name="Klaerr-Blanchard M."/>
            <person name="Klein C."/>
            <person name="Kobayashi Y."/>
            <person name="Koetter P."/>
            <person name="Koningstein G."/>
            <person name="Krogh S."/>
            <person name="Kumano M."/>
            <person name="Kurita K."/>
            <person name="Lapidus A."/>
            <person name="Lardinois S."/>
            <person name="Lauber J."/>
            <person name="Lazarevic V."/>
            <person name="Lee S.-M."/>
            <person name="Levine A."/>
            <person name="Liu H."/>
            <person name="Masuda S."/>
            <person name="Mauel C."/>
            <person name="Medigue C."/>
            <person name="Medina N."/>
            <person name="Mellado R.P."/>
            <person name="Mizuno M."/>
            <person name="Moestl D."/>
            <person name="Nakai S."/>
            <person name="Noback M."/>
            <person name="Noone D."/>
            <person name="O'Reilly M."/>
            <person name="Ogawa K."/>
            <person name="Ogiwara A."/>
            <person name="Oudega B."/>
            <person name="Park S.-H."/>
            <person name="Parro V."/>
            <person name="Pohl T.M."/>
            <person name="Portetelle D."/>
            <person name="Porwollik S."/>
            <person name="Prescott A.M."/>
            <person name="Presecan E."/>
            <person name="Pujic P."/>
            <person name="Purnelle B."/>
            <person name="Rapoport G."/>
            <person name="Rey M."/>
            <person name="Reynolds S."/>
            <person name="Rieger M."/>
            <person name="Rivolta C."/>
            <person name="Rocha E."/>
            <person name="Roche B."/>
            <person name="Rose M."/>
            <person name="Sadaie Y."/>
            <person name="Sato T."/>
            <person name="Scanlan E."/>
            <person name="Schleich S."/>
            <person name="Schroeter R."/>
            <person name="Scoffone F."/>
            <person name="Sekiguchi J."/>
            <person name="Sekowska A."/>
            <person name="Seror S.J."/>
            <person name="Serror P."/>
            <person name="Shin B.-S."/>
            <person name="Soldo B."/>
            <person name="Sorokin A."/>
            <person name="Tacconi E."/>
            <person name="Takagi T."/>
            <person name="Takahashi H."/>
            <person name="Takemaru K."/>
            <person name="Takeuchi M."/>
            <person name="Tamakoshi A."/>
            <person name="Tanaka T."/>
            <person name="Terpstra P."/>
            <person name="Tognoni A."/>
            <person name="Tosato V."/>
            <person name="Uchiyama S."/>
            <person name="Vandenbol M."/>
            <person name="Vannier F."/>
            <person name="Vassarotti A."/>
            <person name="Viari A."/>
            <person name="Wambutt R."/>
            <person name="Wedler E."/>
            <person name="Wedler H."/>
            <person name="Weitzenegger T."/>
            <person name="Winters P."/>
            <person name="Wipat A."/>
            <person name="Yamamoto H."/>
            <person name="Yamane K."/>
            <person name="Yasumoto K."/>
            <person name="Yata K."/>
            <person name="Yoshida K."/>
            <person name="Yoshikawa H.-F."/>
            <person name="Zumstein E."/>
            <person name="Yoshikawa H."/>
            <person name="Danchin A."/>
        </authorList>
    </citation>
    <scope>NUCLEOTIDE SEQUENCE [LARGE SCALE GENOMIC DNA]</scope>
    <source>
        <strain>168</strain>
    </source>
</reference>
<reference key="3">
    <citation type="journal article" date="2009" name="Microbiology">
        <title>From a consortium sequence to a unified sequence: the Bacillus subtilis 168 reference genome a decade later.</title>
        <authorList>
            <person name="Barbe V."/>
            <person name="Cruveiller S."/>
            <person name="Kunst F."/>
            <person name="Lenoble P."/>
            <person name="Meurice G."/>
            <person name="Sekowska A."/>
            <person name="Vallenet D."/>
            <person name="Wang T."/>
            <person name="Moszer I."/>
            <person name="Medigue C."/>
            <person name="Danchin A."/>
        </authorList>
    </citation>
    <scope>SEQUENCE REVISION TO 262</scope>
</reference>
<keyword id="KW-0963">Cytoplasm</keyword>
<keyword id="KW-0326">Glycosidase</keyword>
<keyword id="KW-0378">Hydrolase</keyword>
<keyword id="KW-1185">Reference proteome</keyword>
<evidence type="ECO:0000250" key="1"/>
<evidence type="ECO:0000305" key="2"/>
<accession>O05242</accession>
<accession>Q795N0</accession>
<comment type="catalytic activity">
    <reaction>
        <text>Hydrolysis of (1-&gt;6)-alpha-D-glucosidic linkages in some oligosaccharides produced from starch and glycogen by alpha-amylase, and in isomaltose.</text>
        <dbReference type="EC" id="3.2.1.10"/>
    </reaction>
</comment>
<comment type="subcellular location">
    <subcellularLocation>
        <location evidence="1">Cytoplasm</location>
    </subcellularLocation>
</comment>
<comment type="similarity">
    <text evidence="2">Belongs to the glycosyl hydrolase 13 family.</text>
</comment>